<protein>
    <recommendedName>
        <fullName evidence="1">ATP synthase subunit beta</fullName>
        <ecNumber evidence="1">7.1.2.2</ecNumber>
    </recommendedName>
    <alternativeName>
        <fullName evidence="1">ATP synthase F1 sector subunit beta</fullName>
    </alternativeName>
    <alternativeName>
        <fullName evidence="1">F-ATPase subunit beta</fullName>
    </alternativeName>
</protein>
<accession>A6L8P2</accession>
<organism>
    <name type="scientific">Parabacteroides distasonis (strain ATCC 8503 / DSM 20701 / CIP 104284 / JCM 5825 / NCTC 11152)</name>
    <dbReference type="NCBI Taxonomy" id="435591"/>
    <lineage>
        <taxon>Bacteria</taxon>
        <taxon>Pseudomonadati</taxon>
        <taxon>Bacteroidota</taxon>
        <taxon>Bacteroidia</taxon>
        <taxon>Bacteroidales</taxon>
        <taxon>Tannerellaceae</taxon>
        <taxon>Parabacteroides</taxon>
    </lineage>
</organism>
<keyword id="KW-0066">ATP synthesis</keyword>
<keyword id="KW-0067">ATP-binding</keyword>
<keyword id="KW-0997">Cell inner membrane</keyword>
<keyword id="KW-1003">Cell membrane</keyword>
<keyword id="KW-0139">CF(1)</keyword>
<keyword id="KW-0375">Hydrogen ion transport</keyword>
<keyword id="KW-0406">Ion transport</keyword>
<keyword id="KW-0472">Membrane</keyword>
<keyword id="KW-0547">Nucleotide-binding</keyword>
<keyword id="KW-1185">Reference proteome</keyword>
<keyword id="KW-1278">Translocase</keyword>
<keyword id="KW-0813">Transport</keyword>
<name>ATPB_PARD8</name>
<gene>
    <name evidence="1" type="primary">atpD</name>
    <name type="ordered locus">BDI_0271</name>
</gene>
<feature type="chain" id="PRO_1000055140" description="ATP synthase subunit beta">
    <location>
        <begin position="1"/>
        <end position="505"/>
    </location>
</feature>
<feature type="binding site" evidence="1">
    <location>
        <begin position="158"/>
        <end position="165"/>
    </location>
    <ligand>
        <name>ATP</name>
        <dbReference type="ChEBI" id="CHEBI:30616"/>
    </ligand>
</feature>
<proteinExistence type="inferred from homology"/>
<dbReference type="EC" id="7.1.2.2" evidence="1"/>
<dbReference type="EMBL" id="CP000140">
    <property type="protein sequence ID" value="ABR42056.1"/>
    <property type="molecule type" value="Genomic_DNA"/>
</dbReference>
<dbReference type="RefSeq" id="WP_005861799.1">
    <property type="nucleotide sequence ID" value="NZ_LR215978.1"/>
</dbReference>
<dbReference type="SMR" id="A6L8P2"/>
<dbReference type="STRING" id="435591.BDI_0271"/>
<dbReference type="PaxDb" id="435591-BDI_0271"/>
<dbReference type="KEGG" id="pdi:BDI_0271"/>
<dbReference type="eggNOG" id="COG0055">
    <property type="taxonomic scope" value="Bacteria"/>
</dbReference>
<dbReference type="HOGENOM" id="CLU_022398_0_2_10"/>
<dbReference type="BioCyc" id="PDIS435591:G1G5A-277-MONOMER"/>
<dbReference type="Proteomes" id="UP000000566">
    <property type="component" value="Chromosome"/>
</dbReference>
<dbReference type="GO" id="GO:0005886">
    <property type="term" value="C:plasma membrane"/>
    <property type="evidence" value="ECO:0007669"/>
    <property type="project" value="UniProtKB-SubCell"/>
</dbReference>
<dbReference type="GO" id="GO:0045259">
    <property type="term" value="C:proton-transporting ATP synthase complex"/>
    <property type="evidence" value="ECO:0007669"/>
    <property type="project" value="UniProtKB-KW"/>
</dbReference>
<dbReference type="GO" id="GO:0005524">
    <property type="term" value="F:ATP binding"/>
    <property type="evidence" value="ECO:0007669"/>
    <property type="project" value="UniProtKB-UniRule"/>
</dbReference>
<dbReference type="GO" id="GO:0016887">
    <property type="term" value="F:ATP hydrolysis activity"/>
    <property type="evidence" value="ECO:0007669"/>
    <property type="project" value="InterPro"/>
</dbReference>
<dbReference type="GO" id="GO:0046933">
    <property type="term" value="F:proton-transporting ATP synthase activity, rotational mechanism"/>
    <property type="evidence" value="ECO:0007669"/>
    <property type="project" value="UniProtKB-UniRule"/>
</dbReference>
<dbReference type="CDD" id="cd18110">
    <property type="entry name" value="ATP-synt_F1_beta_C"/>
    <property type="match status" value="1"/>
</dbReference>
<dbReference type="CDD" id="cd18115">
    <property type="entry name" value="ATP-synt_F1_beta_N"/>
    <property type="match status" value="1"/>
</dbReference>
<dbReference type="CDD" id="cd01133">
    <property type="entry name" value="F1-ATPase_beta_CD"/>
    <property type="match status" value="1"/>
</dbReference>
<dbReference type="FunFam" id="1.10.1140.10:FF:000001">
    <property type="entry name" value="ATP synthase subunit beta"/>
    <property type="match status" value="1"/>
</dbReference>
<dbReference type="FunFam" id="2.40.10.170:FF:000011">
    <property type="entry name" value="ATP synthase subunit beta"/>
    <property type="match status" value="1"/>
</dbReference>
<dbReference type="FunFam" id="3.40.50.300:FF:000004">
    <property type="entry name" value="ATP synthase subunit beta"/>
    <property type="match status" value="1"/>
</dbReference>
<dbReference type="Gene3D" id="2.40.10.170">
    <property type="match status" value="1"/>
</dbReference>
<dbReference type="Gene3D" id="1.10.1140.10">
    <property type="entry name" value="Bovine Mitochondrial F1-atpase, Atp Synthase Beta Chain, Chain D, domain 3"/>
    <property type="match status" value="1"/>
</dbReference>
<dbReference type="Gene3D" id="3.40.50.300">
    <property type="entry name" value="P-loop containing nucleotide triphosphate hydrolases"/>
    <property type="match status" value="1"/>
</dbReference>
<dbReference type="HAMAP" id="MF_01347">
    <property type="entry name" value="ATP_synth_beta_bact"/>
    <property type="match status" value="1"/>
</dbReference>
<dbReference type="InterPro" id="IPR003593">
    <property type="entry name" value="AAA+_ATPase"/>
</dbReference>
<dbReference type="InterPro" id="IPR055190">
    <property type="entry name" value="ATP-synt_VA_C"/>
</dbReference>
<dbReference type="InterPro" id="IPR005722">
    <property type="entry name" value="ATP_synth_F1_bsu"/>
</dbReference>
<dbReference type="InterPro" id="IPR020003">
    <property type="entry name" value="ATPase_a/bsu_AS"/>
</dbReference>
<dbReference type="InterPro" id="IPR050053">
    <property type="entry name" value="ATPase_alpha/beta_chains"/>
</dbReference>
<dbReference type="InterPro" id="IPR004100">
    <property type="entry name" value="ATPase_F1/V1/A1_a/bsu_N"/>
</dbReference>
<dbReference type="InterPro" id="IPR036121">
    <property type="entry name" value="ATPase_F1/V1/A1_a/bsu_N_sf"/>
</dbReference>
<dbReference type="InterPro" id="IPR000194">
    <property type="entry name" value="ATPase_F1/V1/A1_a/bsu_nucl-bd"/>
</dbReference>
<dbReference type="InterPro" id="IPR024034">
    <property type="entry name" value="ATPase_F1/V1_b/a_C"/>
</dbReference>
<dbReference type="InterPro" id="IPR027417">
    <property type="entry name" value="P-loop_NTPase"/>
</dbReference>
<dbReference type="NCBIfam" id="TIGR01039">
    <property type="entry name" value="atpD"/>
    <property type="match status" value="1"/>
</dbReference>
<dbReference type="PANTHER" id="PTHR15184">
    <property type="entry name" value="ATP SYNTHASE"/>
    <property type="match status" value="1"/>
</dbReference>
<dbReference type="PANTHER" id="PTHR15184:SF71">
    <property type="entry name" value="ATP SYNTHASE SUBUNIT BETA, MITOCHONDRIAL"/>
    <property type="match status" value="1"/>
</dbReference>
<dbReference type="Pfam" id="PF00006">
    <property type="entry name" value="ATP-synt_ab"/>
    <property type="match status" value="1"/>
</dbReference>
<dbReference type="Pfam" id="PF02874">
    <property type="entry name" value="ATP-synt_ab_N"/>
    <property type="match status" value="1"/>
</dbReference>
<dbReference type="Pfam" id="PF22919">
    <property type="entry name" value="ATP-synt_VA_C"/>
    <property type="match status" value="1"/>
</dbReference>
<dbReference type="SMART" id="SM00382">
    <property type="entry name" value="AAA"/>
    <property type="match status" value="1"/>
</dbReference>
<dbReference type="SUPFAM" id="SSF47917">
    <property type="entry name" value="C-terminal domain of alpha and beta subunits of F1 ATP synthase"/>
    <property type="match status" value="1"/>
</dbReference>
<dbReference type="SUPFAM" id="SSF50615">
    <property type="entry name" value="N-terminal domain of alpha and beta subunits of F1 ATP synthase"/>
    <property type="match status" value="1"/>
</dbReference>
<dbReference type="SUPFAM" id="SSF52540">
    <property type="entry name" value="P-loop containing nucleoside triphosphate hydrolases"/>
    <property type="match status" value="1"/>
</dbReference>
<dbReference type="PROSITE" id="PS00152">
    <property type="entry name" value="ATPASE_ALPHA_BETA"/>
    <property type="match status" value="1"/>
</dbReference>
<sequence length="505" mass="55481">MGEIKGYISQVIGPVVDIHFDYGTEETVTLPRIHDAMEISRPNGKILIVEVQQHIGENTVRTVAMDTTDGLRRGMEAVSYGMPITMPTGDQVKGRLMNVTGDPIDGMAQLTKDGALPIHREPPKFEDLTTTQEVLYTGIKVIDLLEPYAKGGKIGLFGGAGVGKTVLIMELINNIAKKNNGFSVFAGVGERTREGNDLLREMIQSGVIRYGEEFKKSMEAGNWDLSKIDYDELAKSQATLVFGQMNEPPGARSSVALSGLTIAESFRDKASEGERKDILFFIDNIFRFTQAGSEVSALLGRMPSAVGYQPTLATEMGAMQERITSTKKGSITSVQAVYVPADDLTDPAPATTFTHLDATTVLSRKITELGIYPAVDPLESTSRILDPLIVGKEHYDTAQRVKQILQRNKELQDIISILGMEELSDEDRLTVNRARRVQRFLSQPFSVAEQFTGVPGVMVSIEDTIRGFKMIMDGETDDIPEQAFLNVGTIEDVLEKAKQLKEQAN</sequence>
<evidence type="ECO:0000255" key="1">
    <source>
        <dbReference type="HAMAP-Rule" id="MF_01347"/>
    </source>
</evidence>
<reference key="1">
    <citation type="journal article" date="2007" name="PLoS Biol.">
        <title>Evolution of symbiotic bacteria in the distal human intestine.</title>
        <authorList>
            <person name="Xu J."/>
            <person name="Mahowald M.A."/>
            <person name="Ley R.E."/>
            <person name="Lozupone C.A."/>
            <person name="Hamady M."/>
            <person name="Martens E.C."/>
            <person name="Henrissat B."/>
            <person name="Coutinho P.M."/>
            <person name="Minx P."/>
            <person name="Latreille P."/>
            <person name="Cordum H."/>
            <person name="Van Brunt A."/>
            <person name="Kim K."/>
            <person name="Fulton R.S."/>
            <person name="Fulton L.A."/>
            <person name="Clifton S.W."/>
            <person name="Wilson R.K."/>
            <person name="Knight R.D."/>
            <person name="Gordon J.I."/>
        </authorList>
    </citation>
    <scope>NUCLEOTIDE SEQUENCE [LARGE SCALE GENOMIC DNA]</scope>
    <source>
        <strain>ATCC 8503 / DSM 20701 / CIP 104284 / JCM 5825 / NCTC 11152</strain>
    </source>
</reference>
<comment type="function">
    <text evidence="1">Produces ATP from ADP in the presence of a proton gradient across the membrane. The catalytic sites are hosted primarily by the beta subunits.</text>
</comment>
<comment type="catalytic activity">
    <reaction evidence="1">
        <text>ATP + H2O + 4 H(+)(in) = ADP + phosphate + 5 H(+)(out)</text>
        <dbReference type="Rhea" id="RHEA:57720"/>
        <dbReference type="ChEBI" id="CHEBI:15377"/>
        <dbReference type="ChEBI" id="CHEBI:15378"/>
        <dbReference type="ChEBI" id="CHEBI:30616"/>
        <dbReference type="ChEBI" id="CHEBI:43474"/>
        <dbReference type="ChEBI" id="CHEBI:456216"/>
        <dbReference type="EC" id="7.1.2.2"/>
    </reaction>
</comment>
<comment type="subunit">
    <text evidence="1">F-type ATPases have 2 components, CF(1) - the catalytic core - and CF(0) - the membrane proton channel. CF(1) has five subunits: alpha(3), beta(3), gamma(1), delta(1), epsilon(1). CF(0) has three main subunits: a(1), b(2) and c(9-12). The alpha and beta chains form an alternating ring which encloses part of the gamma chain. CF(1) is attached to CF(0) by a central stalk formed by the gamma and epsilon chains, while a peripheral stalk is formed by the delta and b chains.</text>
</comment>
<comment type="subcellular location">
    <subcellularLocation>
        <location evidence="1">Cell inner membrane</location>
        <topology evidence="1">Peripheral membrane protein</topology>
    </subcellularLocation>
</comment>
<comment type="similarity">
    <text evidence="1">Belongs to the ATPase alpha/beta chains family.</text>
</comment>